<feature type="chain" id="PRO_0000376573" description="Probable cell division protein WhiA">
    <location>
        <begin position="1"/>
        <end position="303"/>
    </location>
</feature>
<feature type="DNA-binding region" description="H-T-H motif" evidence="1">
    <location>
        <begin position="272"/>
        <end position="303"/>
    </location>
</feature>
<accession>B4U278</accession>
<comment type="function">
    <text evidence="1">Involved in cell division and chromosome segregation.</text>
</comment>
<comment type="similarity">
    <text evidence="1">Belongs to the WhiA family.</text>
</comment>
<evidence type="ECO:0000255" key="1">
    <source>
        <dbReference type="HAMAP-Rule" id="MF_01420"/>
    </source>
</evidence>
<organism>
    <name type="scientific">Streptococcus equi subsp. zooepidemicus (strain MGCS10565)</name>
    <dbReference type="NCBI Taxonomy" id="552526"/>
    <lineage>
        <taxon>Bacteria</taxon>
        <taxon>Bacillati</taxon>
        <taxon>Bacillota</taxon>
        <taxon>Bacilli</taxon>
        <taxon>Lactobacillales</taxon>
        <taxon>Streptococcaceae</taxon>
        <taxon>Streptococcus</taxon>
    </lineage>
</organism>
<dbReference type="EMBL" id="CP001129">
    <property type="protein sequence ID" value="ACG62095.1"/>
    <property type="molecule type" value="Genomic_DNA"/>
</dbReference>
<dbReference type="RefSeq" id="WP_012515371.1">
    <property type="nucleotide sequence ID" value="NC_011134.1"/>
</dbReference>
<dbReference type="SMR" id="B4U278"/>
<dbReference type="KEGG" id="sez:Sez_0732"/>
<dbReference type="HOGENOM" id="CLU_053282_0_0_9"/>
<dbReference type="Proteomes" id="UP000001873">
    <property type="component" value="Chromosome"/>
</dbReference>
<dbReference type="GO" id="GO:0003677">
    <property type="term" value="F:DNA binding"/>
    <property type="evidence" value="ECO:0007669"/>
    <property type="project" value="UniProtKB-UniRule"/>
</dbReference>
<dbReference type="GO" id="GO:0051301">
    <property type="term" value="P:cell division"/>
    <property type="evidence" value="ECO:0007669"/>
    <property type="project" value="UniProtKB-UniRule"/>
</dbReference>
<dbReference type="GO" id="GO:0043937">
    <property type="term" value="P:regulation of sporulation"/>
    <property type="evidence" value="ECO:0007669"/>
    <property type="project" value="InterPro"/>
</dbReference>
<dbReference type="Gene3D" id="3.10.28.10">
    <property type="entry name" value="Homing endonucleases"/>
    <property type="match status" value="1"/>
</dbReference>
<dbReference type="HAMAP" id="MF_01420">
    <property type="entry name" value="HTH_type_WhiA"/>
    <property type="match status" value="1"/>
</dbReference>
<dbReference type="InterPro" id="IPR027434">
    <property type="entry name" value="Homing_endonucl"/>
</dbReference>
<dbReference type="InterPro" id="IPR018478">
    <property type="entry name" value="Sporu_reg_WhiA_N_dom"/>
</dbReference>
<dbReference type="InterPro" id="IPR003802">
    <property type="entry name" value="Sporulation_regulator_WhiA"/>
</dbReference>
<dbReference type="InterPro" id="IPR023054">
    <property type="entry name" value="Sporulation_regulator_WhiA_C"/>
</dbReference>
<dbReference type="InterPro" id="IPR039518">
    <property type="entry name" value="WhiA_LAGLIDADG_dom"/>
</dbReference>
<dbReference type="NCBIfam" id="TIGR00647">
    <property type="entry name" value="DNA_bind_WhiA"/>
    <property type="match status" value="1"/>
</dbReference>
<dbReference type="PANTHER" id="PTHR37307">
    <property type="entry name" value="CELL DIVISION PROTEIN WHIA-RELATED"/>
    <property type="match status" value="1"/>
</dbReference>
<dbReference type="PANTHER" id="PTHR37307:SF1">
    <property type="entry name" value="CELL DIVISION PROTEIN WHIA-RELATED"/>
    <property type="match status" value="1"/>
</dbReference>
<dbReference type="Pfam" id="PF02650">
    <property type="entry name" value="HTH_WhiA"/>
    <property type="match status" value="1"/>
</dbReference>
<dbReference type="Pfam" id="PF14527">
    <property type="entry name" value="LAGLIDADG_WhiA"/>
    <property type="match status" value="1"/>
</dbReference>
<dbReference type="Pfam" id="PF10298">
    <property type="entry name" value="WhiA_N"/>
    <property type="match status" value="1"/>
</dbReference>
<dbReference type="SUPFAM" id="SSF55608">
    <property type="entry name" value="Homing endonucleases"/>
    <property type="match status" value="1"/>
</dbReference>
<proteinExistence type="inferred from homology"/>
<reference key="1">
    <citation type="journal article" date="2008" name="PLoS ONE">
        <title>Genome sequence of a lancefield group C Streptococcus zooepidemicus strain causing epidemic nephritis: new information about an old disease.</title>
        <authorList>
            <person name="Beres S.B."/>
            <person name="Sesso R."/>
            <person name="Pinto S.W.L."/>
            <person name="Hoe N.P."/>
            <person name="Porcella S.F."/>
            <person name="Deleo F.R."/>
            <person name="Musser J.M."/>
        </authorList>
    </citation>
    <scope>NUCLEOTIDE SEQUENCE [LARGE SCALE GENOMIC DNA]</scope>
    <source>
        <strain>MGCS10565</strain>
    </source>
</reference>
<gene>
    <name evidence="1" type="primary">whiA</name>
    <name type="ordered locus">Sez_0732</name>
</gene>
<name>WHIA_STREM</name>
<protein>
    <recommendedName>
        <fullName evidence="1">Probable cell division protein WhiA</fullName>
    </recommendedName>
</protein>
<sequence>MSFTTTVKEELIHLSASDQTELSAIIKLAGSLGLANQSLNLSITTENAKIARYIYALIEDTYHIIPEIKYHQKTNLKKNRVYTVYLDKQVDKLLADLKLADSFFGIETGIEQQVMSDDDAGRAYLKGAFLAAGTVRDPESGKYQLEIYSVYLDHAQDLAQLMHKFMLDAKVIERKNGAVTYLQKAEDIMDFLIIIGAMSCKEEFEAVKLLREARNDINRANNAETANIAKTITASMRTINNIIKIMDTIGLDSLPVELQQIAQMRVANPDYSLQQIADSLDFAITKSGVNHRLRKINKLAEDL</sequence>
<keyword id="KW-0131">Cell cycle</keyword>
<keyword id="KW-0132">Cell division</keyword>
<keyword id="KW-0238">DNA-binding</keyword>